<sequence length="90" mass="10614">MKTAIFTVVLALAVFAVLSFGWEANEKALSEEFTELIHEKEAASETEARECRYFWGECHDHMPCCDWLVCRYKWPITYNICVWSRTFPEK</sequence>
<dbReference type="EMBL" id="GU292981">
    <property type="protein sequence ID" value="ADB56797.1"/>
    <property type="molecule type" value="mRNA"/>
</dbReference>
<dbReference type="SMR" id="D2Y2A4"/>
<dbReference type="ArachnoServer" id="AS001897">
    <property type="toxin name" value="U7-theraphotoxin-Hhn1c"/>
</dbReference>
<dbReference type="GO" id="GO:0005576">
    <property type="term" value="C:extracellular region"/>
    <property type="evidence" value="ECO:0007669"/>
    <property type="project" value="UniProtKB-SubCell"/>
</dbReference>
<dbReference type="GO" id="GO:0008200">
    <property type="term" value="F:ion channel inhibitor activity"/>
    <property type="evidence" value="ECO:0007669"/>
    <property type="project" value="InterPro"/>
</dbReference>
<dbReference type="GO" id="GO:0090729">
    <property type="term" value="F:toxin activity"/>
    <property type="evidence" value="ECO:0007669"/>
    <property type="project" value="UniProtKB-KW"/>
</dbReference>
<dbReference type="InterPro" id="IPR011696">
    <property type="entry name" value="Huwentoxin-1"/>
</dbReference>
<dbReference type="Pfam" id="PF07740">
    <property type="entry name" value="Toxin_12"/>
    <property type="match status" value="1"/>
</dbReference>
<dbReference type="SUPFAM" id="SSF57059">
    <property type="entry name" value="omega toxin-like"/>
    <property type="match status" value="1"/>
</dbReference>
<name>H13C1_CYRHA</name>
<protein>
    <recommendedName>
        <fullName>U7-theraphotoxin-Hhn1c</fullName>
        <shortName>U7-TRTX-Hhn1c</shortName>
    </recommendedName>
    <alternativeName>
        <fullName>Hainantoxin-XIII-3</fullName>
        <shortName>HNTX-XIII-3</shortName>
    </alternativeName>
</protein>
<feature type="signal peptide" evidence="2">
    <location>
        <begin position="1"/>
        <end position="19"/>
    </location>
</feature>
<feature type="propeptide" id="PRO_0000400697" evidence="1">
    <location>
        <begin position="20"/>
        <end position="50"/>
    </location>
</feature>
<feature type="peptide" id="PRO_0000400698" description="U7-theraphotoxin-Hhn1c">
    <location>
        <begin position="51"/>
        <end position="90"/>
    </location>
</feature>
<feature type="disulfide bond" evidence="1">
    <location>
        <begin position="51"/>
        <end position="65"/>
    </location>
</feature>
<feature type="disulfide bond" evidence="1">
    <location>
        <begin position="58"/>
        <end position="70"/>
    </location>
</feature>
<feature type="disulfide bond" evidence="1">
    <location>
        <begin position="64"/>
        <end position="81"/>
    </location>
</feature>
<evidence type="ECO:0000250" key="1"/>
<evidence type="ECO:0000255" key="2"/>
<evidence type="ECO:0000305" key="3"/>
<accession>D2Y2A4</accession>
<reference key="1">
    <citation type="journal article" date="2010" name="J. Proteome Res.">
        <title>Molecular diversification of peptide toxins from the tarantula Haplopelma hainanum (Ornithoctonus hainana) venom based on transcriptomic, peptidomic, and genomic analyses.</title>
        <authorList>
            <person name="Tang X."/>
            <person name="Zhang Y."/>
            <person name="Hu W."/>
            <person name="Xu D."/>
            <person name="Tao H."/>
            <person name="Yang X."/>
            <person name="Li Y."/>
            <person name="Jiang L."/>
            <person name="Liang S."/>
        </authorList>
    </citation>
    <scope>NUCLEOTIDE SEQUENCE [LARGE SCALE MRNA]</scope>
    <source>
        <tissue>Venom gland</tissue>
    </source>
</reference>
<keyword id="KW-1015">Disulfide bond</keyword>
<keyword id="KW-0872">Ion channel impairing toxin</keyword>
<keyword id="KW-0960">Knottin</keyword>
<keyword id="KW-0964">Secreted</keyword>
<keyword id="KW-0732">Signal</keyword>
<keyword id="KW-0800">Toxin</keyword>
<comment type="function">
    <text evidence="1">Ion channel inhibitor.</text>
</comment>
<comment type="subcellular location">
    <subcellularLocation>
        <location evidence="1">Secreted</location>
    </subcellularLocation>
</comment>
<comment type="tissue specificity">
    <text>Expressed by the venom gland.</text>
</comment>
<comment type="domain">
    <text evidence="1">The presence of a 'disulfide through disulfide knot' structurally defines this protein as a knottin.</text>
</comment>
<comment type="similarity">
    <text evidence="3">Belongs to the neurotoxin 10 (Hwtx-1) family. 13 (Hntx-13) subfamily.</text>
</comment>
<organism>
    <name type="scientific">Cyriopagopus hainanus</name>
    <name type="common">Chinese bird spider</name>
    <name type="synonym">Haplopelma hainanum</name>
    <dbReference type="NCBI Taxonomy" id="209901"/>
    <lineage>
        <taxon>Eukaryota</taxon>
        <taxon>Metazoa</taxon>
        <taxon>Ecdysozoa</taxon>
        <taxon>Arthropoda</taxon>
        <taxon>Chelicerata</taxon>
        <taxon>Arachnida</taxon>
        <taxon>Araneae</taxon>
        <taxon>Mygalomorphae</taxon>
        <taxon>Theraphosidae</taxon>
        <taxon>Haplopelma</taxon>
    </lineage>
</organism>
<proteinExistence type="evidence at transcript level"/>